<evidence type="ECO:0000250" key="1"/>
<evidence type="ECO:0000255" key="2">
    <source>
        <dbReference type="PROSITE-ProRule" id="PRU00441"/>
    </source>
</evidence>
<evidence type="ECO:0000305" key="3"/>
<name>Y1032_BRUAB</name>
<organism>
    <name type="scientific">Brucella abortus biovar 1 (strain 9-941)</name>
    <dbReference type="NCBI Taxonomy" id="262698"/>
    <lineage>
        <taxon>Bacteria</taxon>
        <taxon>Pseudomonadati</taxon>
        <taxon>Pseudomonadota</taxon>
        <taxon>Alphaproteobacteria</taxon>
        <taxon>Hyphomicrobiales</taxon>
        <taxon>Brucellaceae</taxon>
        <taxon>Brucella/Ochrobactrum group</taxon>
        <taxon>Brucella</taxon>
    </lineage>
</organism>
<sequence>MTELASPTSFSMPDIGKSPVVLTARRLMRHRSFRIGLVLLLIVVLAAVLAPWITNGKPNATSVRMRFQPPGLEHLFGTDNFGRDLWTRVLYGAQVSLWIGLTVAVLSAILGAIIGIAAAWYRRFDTLLMRVMDALMAFPAILLAIGISAALGPHLSSVIIALTSAYIPRCARIVRASALVLRETDYVDAARLAGASDLRIITRHILPNCLAPLLVTLTFVFAYAILAEATLSFLGIGTPPPHASWGSIVAQGRDYSVDAWWIMLFPGIAITISALAINLIGDGLRDVLDPRLKMEG</sequence>
<proteinExistence type="inferred from homology"/>
<feature type="chain" id="PRO_0000290149" description="Putative peptide transport system permease protein BruAb2_1032">
    <location>
        <begin position="1"/>
        <end position="296"/>
    </location>
</feature>
<feature type="transmembrane region" description="Helical" evidence="2">
    <location>
        <begin position="35"/>
        <end position="55"/>
    </location>
</feature>
<feature type="transmembrane region" description="Helical" evidence="2">
    <location>
        <begin position="97"/>
        <end position="117"/>
    </location>
</feature>
<feature type="transmembrane region" description="Helical" evidence="2">
    <location>
        <begin position="131"/>
        <end position="151"/>
    </location>
</feature>
<feature type="transmembrane region" description="Helical" evidence="2">
    <location>
        <begin position="205"/>
        <end position="225"/>
    </location>
</feature>
<feature type="transmembrane region" description="Helical" evidence="2">
    <location>
        <begin position="229"/>
        <end position="249"/>
    </location>
</feature>
<feature type="transmembrane region" description="Helical" evidence="2">
    <location>
        <begin position="260"/>
        <end position="280"/>
    </location>
</feature>
<feature type="domain" description="ABC transmembrane type-1" evidence="2">
    <location>
        <begin position="97"/>
        <end position="281"/>
    </location>
</feature>
<protein>
    <recommendedName>
        <fullName>Putative peptide transport system permease protein BruAb2_1032</fullName>
    </recommendedName>
</protein>
<accession>Q8VQK5</accession>
<accession>Q576M6</accession>
<reference key="1">
    <citation type="submission" date="2001-12" db="EMBL/GenBank/DDBJ databases">
        <title>Tn1953, a new element from Brucella abortus.</title>
        <authorList>
            <person name="Bricker B.J."/>
        </authorList>
    </citation>
    <scope>NUCLEOTIDE SEQUENCE [GENOMIC DNA]</scope>
    <source>
        <strain>544 / Biovar 1</strain>
    </source>
</reference>
<reference key="2">
    <citation type="journal article" date="2005" name="J. Bacteriol.">
        <title>Completion of the genome sequence of Brucella abortus and comparison to the highly similar genomes of Brucella melitensis and Brucella suis.</title>
        <authorList>
            <person name="Halling S.M."/>
            <person name="Peterson-Burch B.D."/>
            <person name="Bricker B.J."/>
            <person name="Zuerner R.L."/>
            <person name="Qing Z."/>
            <person name="Li L.-L."/>
            <person name="Kapur V."/>
            <person name="Alt D.P."/>
            <person name="Olsen S.C."/>
        </authorList>
    </citation>
    <scope>NUCLEOTIDE SEQUENCE [LARGE SCALE GENOMIC DNA]</scope>
    <source>
        <strain>9-941</strain>
    </source>
</reference>
<keyword id="KW-0997">Cell inner membrane</keyword>
<keyword id="KW-1003">Cell membrane</keyword>
<keyword id="KW-0472">Membrane</keyword>
<keyword id="KW-0812">Transmembrane</keyword>
<keyword id="KW-1133">Transmembrane helix</keyword>
<keyword id="KW-0813">Transport</keyword>
<dbReference type="EMBL" id="AF454951">
    <property type="protein sequence ID" value="AAL59344.1"/>
    <property type="molecule type" value="Genomic_DNA"/>
</dbReference>
<dbReference type="EMBL" id="AE017224">
    <property type="protein sequence ID" value="AAX76408.1"/>
    <property type="molecule type" value="Genomic_DNA"/>
</dbReference>
<dbReference type="RefSeq" id="WP_002965565.1">
    <property type="nucleotide sequence ID" value="NC_006933.1"/>
</dbReference>
<dbReference type="SMR" id="Q8VQK5"/>
<dbReference type="EnsemblBacteria" id="AAX76408">
    <property type="protein sequence ID" value="AAX76408"/>
    <property type="gene ID" value="BruAb2_1032"/>
</dbReference>
<dbReference type="KEGG" id="bmb:BruAb2_1032"/>
<dbReference type="HOGENOM" id="CLU_028518_1_1_5"/>
<dbReference type="Proteomes" id="UP000000540">
    <property type="component" value="Chromosome II"/>
</dbReference>
<dbReference type="GO" id="GO:0005886">
    <property type="term" value="C:plasma membrane"/>
    <property type="evidence" value="ECO:0007669"/>
    <property type="project" value="UniProtKB-SubCell"/>
</dbReference>
<dbReference type="GO" id="GO:0055085">
    <property type="term" value="P:transmembrane transport"/>
    <property type="evidence" value="ECO:0007669"/>
    <property type="project" value="InterPro"/>
</dbReference>
<dbReference type="CDD" id="cd06261">
    <property type="entry name" value="TM_PBP2"/>
    <property type="match status" value="1"/>
</dbReference>
<dbReference type="Gene3D" id="1.10.3720.10">
    <property type="entry name" value="MetI-like"/>
    <property type="match status" value="1"/>
</dbReference>
<dbReference type="InterPro" id="IPR050366">
    <property type="entry name" value="BP-dependent_transpt_permease"/>
</dbReference>
<dbReference type="InterPro" id="IPR000515">
    <property type="entry name" value="MetI-like"/>
</dbReference>
<dbReference type="InterPro" id="IPR035906">
    <property type="entry name" value="MetI-like_sf"/>
</dbReference>
<dbReference type="InterPro" id="IPR025966">
    <property type="entry name" value="OppC_N"/>
</dbReference>
<dbReference type="PANTHER" id="PTHR43386">
    <property type="entry name" value="OLIGOPEPTIDE TRANSPORT SYSTEM PERMEASE PROTEIN APPC"/>
    <property type="match status" value="1"/>
</dbReference>
<dbReference type="PANTHER" id="PTHR43386:SF25">
    <property type="entry name" value="PEPTIDE ABC TRANSPORTER PERMEASE PROTEIN"/>
    <property type="match status" value="1"/>
</dbReference>
<dbReference type="Pfam" id="PF00528">
    <property type="entry name" value="BPD_transp_1"/>
    <property type="match status" value="1"/>
</dbReference>
<dbReference type="Pfam" id="PF12911">
    <property type="entry name" value="OppC_N"/>
    <property type="match status" value="1"/>
</dbReference>
<dbReference type="SUPFAM" id="SSF161098">
    <property type="entry name" value="MetI-like"/>
    <property type="match status" value="1"/>
</dbReference>
<dbReference type="PROSITE" id="PS50928">
    <property type="entry name" value="ABC_TM1"/>
    <property type="match status" value="1"/>
</dbReference>
<comment type="function">
    <text evidence="1">Probably part of an ABC transporter complex that could be involved in peptide import. Probably responsible for the translocation of the substrate across the membrane (By similarity).</text>
</comment>
<comment type="subunit">
    <text evidence="3">The complex is composed of two ATP-binding proteins (BruAb2_1033 and BruAb2_1034), two transmembrane proteins (BruAb2_1031 and BruAb2_1032) and a solute-binding protein (BruAb2_1030).</text>
</comment>
<comment type="subcellular location">
    <subcellularLocation>
        <location evidence="3">Cell inner membrane</location>
        <topology evidence="2">Multi-pass membrane protein</topology>
    </subcellularLocation>
</comment>
<comment type="similarity">
    <text evidence="3">Belongs to the binding-protein-dependent transport system permease family.</text>
</comment>
<gene>
    <name type="ordered locus">BruAb2_1032</name>
</gene>